<organism>
    <name type="scientific">Pseudomonas fluorescens (strain Pf0-1)</name>
    <dbReference type="NCBI Taxonomy" id="205922"/>
    <lineage>
        <taxon>Bacteria</taxon>
        <taxon>Pseudomonadati</taxon>
        <taxon>Pseudomonadota</taxon>
        <taxon>Gammaproteobacteria</taxon>
        <taxon>Pseudomonadales</taxon>
        <taxon>Pseudomonadaceae</taxon>
        <taxon>Pseudomonas</taxon>
    </lineage>
</organism>
<evidence type="ECO:0000255" key="1">
    <source>
        <dbReference type="HAMAP-Rule" id="MF_00730"/>
    </source>
</evidence>
<name>NDPA_PSEPF</name>
<reference key="1">
    <citation type="journal article" date="2009" name="Genome Biol.">
        <title>Genomic and genetic analyses of diversity and plant interactions of Pseudomonas fluorescens.</title>
        <authorList>
            <person name="Silby M.W."/>
            <person name="Cerdeno-Tarraga A.M."/>
            <person name="Vernikos G.S."/>
            <person name="Giddens S.R."/>
            <person name="Jackson R.W."/>
            <person name="Preston G.M."/>
            <person name="Zhang X.-X."/>
            <person name="Moon C.D."/>
            <person name="Gehrig S.M."/>
            <person name="Godfrey S.A.C."/>
            <person name="Knight C.G."/>
            <person name="Malone J.G."/>
            <person name="Robinson Z."/>
            <person name="Spiers A.J."/>
            <person name="Harris S."/>
            <person name="Challis G.L."/>
            <person name="Yaxley A.M."/>
            <person name="Harris D."/>
            <person name="Seeger K."/>
            <person name="Murphy L."/>
            <person name="Rutter S."/>
            <person name="Squares R."/>
            <person name="Quail M.A."/>
            <person name="Saunders E."/>
            <person name="Mavromatis K."/>
            <person name="Brettin T.S."/>
            <person name="Bentley S.D."/>
            <person name="Hothersall J."/>
            <person name="Stephens E."/>
            <person name="Thomas C.M."/>
            <person name="Parkhill J."/>
            <person name="Levy S.B."/>
            <person name="Rainey P.B."/>
            <person name="Thomson N.R."/>
        </authorList>
    </citation>
    <scope>NUCLEOTIDE SEQUENCE [LARGE SCALE GENOMIC DNA]</scope>
    <source>
        <strain>Pf0-1</strain>
    </source>
</reference>
<protein>
    <recommendedName>
        <fullName evidence="1">Nucleoid-associated protein Pfl01_0983</fullName>
    </recommendedName>
</protein>
<gene>
    <name type="ordered locus">Pfl01_0983</name>
</gene>
<comment type="subcellular location">
    <subcellularLocation>
        <location evidence="1">Cytoplasm</location>
        <location evidence="1">Nucleoid</location>
    </subcellularLocation>
</comment>
<comment type="similarity">
    <text evidence="1">Belongs to the YejK family.</text>
</comment>
<dbReference type="EMBL" id="CP000094">
    <property type="protein sequence ID" value="ABA72726.1"/>
    <property type="molecule type" value="Genomic_DNA"/>
</dbReference>
<dbReference type="SMR" id="Q3KHN0"/>
<dbReference type="KEGG" id="pfo:Pfl01_0983"/>
<dbReference type="eggNOG" id="COG3081">
    <property type="taxonomic scope" value="Bacteria"/>
</dbReference>
<dbReference type="HOGENOM" id="CLU_063050_0_1_6"/>
<dbReference type="Proteomes" id="UP000002704">
    <property type="component" value="Chromosome"/>
</dbReference>
<dbReference type="GO" id="GO:0043590">
    <property type="term" value="C:bacterial nucleoid"/>
    <property type="evidence" value="ECO:0007669"/>
    <property type="project" value="TreeGrafter"/>
</dbReference>
<dbReference type="GO" id="GO:0005737">
    <property type="term" value="C:cytoplasm"/>
    <property type="evidence" value="ECO:0007669"/>
    <property type="project" value="UniProtKB-UniRule"/>
</dbReference>
<dbReference type="GO" id="GO:0003690">
    <property type="term" value="F:double-stranded DNA binding"/>
    <property type="evidence" value="ECO:0007669"/>
    <property type="project" value="TreeGrafter"/>
</dbReference>
<dbReference type="GO" id="GO:0003727">
    <property type="term" value="F:single-stranded RNA binding"/>
    <property type="evidence" value="ECO:0007669"/>
    <property type="project" value="TreeGrafter"/>
</dbReference>
<dbReference type="HAMAP" id="MF_00730">
    <property type="entry name" value="NdpA"/>
    <property type="match status" value="1"/>
</dbReference>
<dbReference type="InterPro" id="IPR007358">
    <property type="entry name" value="Nucleoid_associated_NdpA"/>
</dbReference>
<dbReference type="NCBIfam" id="NF001557">
    <property type="entry name" value="PRK00378.1"/>
    <property type="match status" value="1"/>
</dbReference>
<dbReference type="PANTHER" id="PTHR38772">
    <property type="match status" value="1"/>
</dbReference>
<dbReference type="PANTHER" id="PTHR38772:SF1">
    <property type="entry name" value="NUCLEOID-ASSOCIATED PROTEIN YEJK"/>
    <property type="match status" value="1"/>
</dbReference>
<dbReference type="Pfam" id="PF04245">
    <property type="entry name" value="NA37"/>
    <property type="match status" value="1"/>
</dbReference>
<accession>Q3KHN0</accession>
<sequence length="334" mass="37396">MPIRHCIVHLIDKKPDGTPAVLHARDSELAESAAIENMLADLNESYNAKQGKAWGLFHPESGAFPFSGWLKEYMEGGKDFTAFSKVAVEHLQKLMEESNLSVGGHVLFAHYQQGMTDYLAIALLHHSEGVAVTDQLDVTPSRHLDLGQLHLAARINVSEWQNNKQSKQYISFIKGKNGKKVSEYFRDFIGCQEGVDGPGETRTLLKAFSDFVESEDLPEDSAREKTKTLVDYASSQAKLGEPMGLEELSELIDEERPKAFYDHIRNKDYGLSPEIPADKRTLNQFRRFTGRAEGLSISFEAHLLGSKIEYDEEAGTLVIKGLPTSLTDQLKRRN</sequence>
<proteinExistence type="inferred from homology"/>
<feature type="chain" id="PRO_1000045937" description="Nucleoid-associated protein Pfl01_0983">
    <location>
        <begin position="1"/>
        <end position="334"/>
    </location>
</feature>
<keyword id="KW-0963">Cytoplasm</keyword>